<accession>A0A2K4Z9K4</accession>
<protein>
    <recommendedName>
        <fullName evidence="4">Probable small toxic protein BsrH</fullName>
    </recommendedName>
</protein>
<gene>
    <name evidence="3" type="primary">bsrH</name>
    <name type="ORF">BSU_26055</name>
</gene>
<proteinExistence type="evidence at transcript level"/>
<feature type="chain" id="PRO_0000450221" description="Probable small toxic protein BsrH">
    <location>
        <begin position="1"/>
        <end position="29"/>
    </location>
</feature>
<feature type="transmembrane region" description="Helical" evidence="1">
    <location>
        <begin position="6"/>
        <end position="26"/>
    </location>
</feature>
<name>BSRH_BACSU</name>
<dbReference type="EMBL" id="AL009126">
    <property type="protein sequence ID" value="SOX90576.1"/>
    <property type="molecule type" value="Genomic_DNA"/>
</dbReference>
<dbReference type="RefSeq" id="WP_075058862.1">
    <property type="nucleotide sequence ID" value="NZ_OZ025638.1"/>
</dbReference>
<dbReference type="RefSeq" id="YP_009513980.1">
    <property type="nucleotide sequence ID" value="NC_000964.3"/>
</dbReference>
<dbReference type="SMR" id="A0A2K4Z9K4"/>
<dbReference type="EnsemblBacteria" id="SOX90576">
    <property type="protein sequence ID" value="SOX90576"/>
    <property type="gene ID" value="BSU_26055"/>
</dbReference>
<dbReference type="GeneID" id="37862913"/>
<dbReference type="InParanoid" id="A0A2K4Z9K4"/>
<dbReference type="BioCyc" id="BSUB:BSU_26055-MONOMER"/>
<dbReference type="Proteomes" id="UP000001570">
    <property type="component" value="Chromosome"/>
</dbReference>
<dbReference type="GO" id="GO:0005886">
    <property type="term" value="C:plasma membrane"/>
    <property type="evidence" value="ECO:0007669"/>
    <property type="project" value="UniProtKB-SubCell"/>
</dbReference>
<dbReference type="InterPro" id="IPR031616">
    <property type="entry name" value="BsrE-like"/>
</dbReference>
<dbReference type="Pfam" id="PF16935">
    <property type="entry name" value="Hol_Tox"/>
    <property type="match status" value="1"/>
</dbReference>
<reference key="1">
    <citation type="journal article" date="1997" name="Nature">
        <title>The complete genome sequence of the Gram-positive bacterium Bacillus subtilis.</title>
        <authorList>
            <person name="Kunst F."/>
            <person name="Ogasawara N."/>
            <person name="Moszer I."/>
            <person name="Albertini A.M."/>
            <person name="Alloni G."/>
            <person name="Azevedo V."/>
            <person name="Bertero M.G."/>
            <person name="Bessieres P."/>
            <person name="Bolotin A."/>
            <person name="Borchert S."/>
            <person name="Borriss R."/>
            <person name="Boursier L."/>
            <person name="Brans A."/>
            <person name="Braun M."/>
            <person name="Brignell S.C."/>
            <person name="Bron S."/>
            <person name="Brouillet S."/>
            <person name="Bruschi C.V."/>
            <person name="Caldwell B."/>
            <person name="Capuano V."/>
            <person name="Carter N.M."/>
            <person name="Choi S.-K."/>
            <person name="Codani J.-J."/>
            <person name="Connerton I.F."/>
            <person name="Cummings N.J."/>
            <person name="Daniel R.A."/>
            <person name="Denizot F."/>
            <person name="Devine K.M."/>
            <person name="Duesterhoeft A."/>
            <person name="Ehrlich S.D."/>
            <person name="Emmerson P.T."/>
            <person name="Entian K.-D."/>
            <person name="Errington J."/>
            <person name="Fabret C."/>
            <person name="Ferrari E."/>
            <person name="Foulger D."/>
            <person name="Fritz C."/>
            <person name="Fujita M."/>
            <person name="Fujita Y."/>
            <person name="Fuma S."/>
            <person name="Galizzi A."/>
            <person name="Galleron N."/>
            <person name="Ghim S.-Y."/>
            <person name="Glaser P."/>
            <person name="Goffeau A."/>
            <person name="Golightly E.J."/>
            <person name="Grandi G."/>
            <person name="Guiseppi G."/>
            <person name="Guy B.J."/>
            <person name="Haga K."/>
            <person name="Haiech J."/>
            <person name="Harwood C.R."/>
            <person name="Henaut A."/>
            <person name="Hilbert H."/>
            <person name="Holsappel S."/>
            <person name="Hosono S."/>
            <person name="Hullo M.-F."/>
            <person name="Itaya M."/>
            <person name="Jones L.-M."/>
            <person name="Joris B."/>
            <person name="Karamata D."/>
            <person name="Kasahara Y."/>
            <person name="Klaerr-Blanchard M."/>
            <person name="Klein C."/>
            <person name="Kobayashi Y."/>
            <person name="Koetter P."/>
            <person name="Koningstein G."/>
            <person name="Krogh S."/>
            <person name="Kumano M."/>
            <person name="Kurita K."/>
            <person name="Lapidus A."/>
            <person name="Lardinois S."/>
            <person name="Lauber J."/>
            <person name="Lazarevic V."/>
            <person name="Lee S.-M."/>
            <person name="Levine A."/>
            <person name="Liu H."/>
            <person name="Masuda S."/>
            <person name="Mauel C."/>
            <person name="Medigue C."/>
            <person name="Medina N."/>
            <person name="Mellado R.P."/>
            <person name="Mizuno M."/>
            <person name="Moestl D."/>
            <person name="Nakai S."/>
            <person name="Noback M."/>
            <person name="Noone D."/>
            <person name="O'Reilly M."/>
            <person name="Ogawa K."/>
            <person name="Ogiwara A."/>
            <person name="Oudega B."/>
            <person name="Park S.-H."/>
            <person name="Parro V."/>
            <person name="Pohl T.M."/>
            <person name="Portetelle D."/>
            <person name="Porwollik S."/>
            <person name="Prescott A.M."/>
            <person name="Presecan E."/>
            <person name="Pujic P."/>
            <person name="Purnelle B."/>
            <person name="Rapoport G."/>
            <person name="Rey M."/>
            <person name="Reynolds S."/>
            <person name="Rieger M."/>
            <person name="Rivolta C."/>
            <person name="Rocha E."/>
            <person name="Roche B."/>
            <person name="Rose M."/>
            <person name="Sadaie Y."/>
            <person name="Sato T."/>
            <person name="Scanlan E."/>
            <person name="Schleich S."/>
            <person name="Schroeter R."/>
            <person name="Scoffone F."/>
            <person name="Sekiguchi J."/>
            <person name="Sekowska A."/>
            <person name="Seror S.J."/>
            <person name="Serror P."/>
            <person name="Shin B.-S."/>
            <person name="Soldo B."/>
            <person name="Sorokin A."/>
            <person name="Tacconi E."/>
            <person name="Takagi T."/>
            <person name="Takahashi H."/>
            <person name="Takemaru K."/>
            <person name="Takeuchi M."/>
            <person name="Tamakoshi A."/>
            <person name="Tanaka T."/>
            <person name="Terpstra P."/>
            <person name="Tognoni A."/>
            <person name="Tosato V."/>
            <person name="Uchiyama S."/>
            <person name="Vandenbol M."/>
            <person name="Vannier F."/>
            <person name="Vassarotti A."/>
            <person name="Viari A."/>
            <person name="Wambutt R."/>
            <person name="Wedler E."/>
            <person name="Wedler H."/>
            <person name="Weitzenegger T."/>
            <person name="Winters P."/>
            <person name="Wipat A."/>
            <person name="Yamamoto H."/>
            <person name="Yamane K."/>
            <person name="Yasumoto K."/>
            <person name="Yata K."/>
            <person name="Yoshida K."/>
            <person name="Yoshikawa H.-F."/>
            <person name="Zumstein E."/>
            <person name="Yoshikawa H."/>
            <person name="Danchin A."/>
        </authorList>
    </citation>
    <scope>NUCLEOTIDE SEQUENCE [LARGE SCALE GENOMIC DNA]</scope>
    <source>
        <strain>168</strain>
    </source>
</reference>
<reference key="2">
    <citation type="journal article" date="2009" name="Gene">
        <title>Novel small RNA-encoding genes in the intergenic regions of Bacillus subtilis.</title>
        <authorList>
            <person name="Saito S."/>
            <person name="Kakeshita H."/>
            <person name="Nakamura K."/>
        </authorList>
    </citation>
    <scope>IDENTIFICATION</scope>
    <scope>INDUCTION</scope>
    <source>
        <strain>168</strain>
    </source>
</reference>
<reference key="3">
    <citation type="journal article" date="2010" name="Nucleic Acids Res.">
        <title>Identification of regulatory RNAs in Bacillus subtilis.</title>
        <authorList>
            <person name="Irnov I."/>
            <person name="Sharma C.M."/>
            <person name="Vogel J."/>
            <person name="Winkler W.C."/>
        </authorList>
    </citation>
    <scope>IDENTIFICATION</scope>
    <scope>DISCUSSION OF POSSIBLE FUNCTION</scope>
    <source>
        <strain>168</strain>
    </source>
</reference>
<organism>
    <name type="scientific">Bacillus subtilis (strain 168)</name>
    <dbReference type="NCBI Taxonomy" id="224308"/>
    <lineage>
        <taxon>Bacteria</taxon>
        <taxon>Bacillati</taxon>
        <taxon>Bacillota</taxon>
        <taxon>Bacilli</taxon>
        <taxon>Bacillales</taxon>
        <taxon>Bacillaceae</taxon>
        <taxon>Bacillus</taxon>
    </lineage>
</organism>
<comment type="function">
    <text evidence="3 4">Possible toxic component of a type I toxin-antitoxin (TA) system; an overlapping antisense RNA has been identified.</text>
</comment>
<comment type="subcellular location">
    <subcellularLocation>
        <location evidence="5">Cell membrane</location>
        <topology evidence="1">Single-pass membrane protein</topology>
    </subcellularLocation>
</comment>
<comment type="induction">
    <text evidence="2">Accumulates by 2 hours post-innoculation and into stationary phase in rich media.</text>
</comment>
<comment type="miscellaneous">
    <text evidence="5">Encoded in the skin prophage.</text>
</comment>
<keyword id="KW-1003">Cell membrane</keyword>
<keyword id="KW-0472">Membrane</keyword>
<keyword id="KW-1185">Reference proteome</keyword>
<keyword id="KW-1277">Toxin-antitoxin system</keyword>
<keyword id="KW-0812">Transmembrane</keyword>
<keyword id="KW-1133">Transmembrane helix</keyword>
<evidence type="ECO:0000255" key="1"/>
<evidence type="ECO:0000269" key="2">
    <source>
    </source>
</evidence>
<evidence type="ECO:0000303" key="3">
    <source>
    </source>
</evidence>
<evidence type="ECO:0000303" key="4">
    <source>
    </source>
</evidence>
<evidence type="ECO:0000305" key="5"/>
<sequence>MHVSTFQALMLMLAFGSFIIALLTYIKKK</sequence>